<proteinExistence type="inferred from homology"/>
<keyword id="KW-0963">Cytoplasm</keyword>
<keyword id="KW-0324">Glycolysis</keyword>
<keyword id="KW-0456">Lyase</keyword>
<keyword id="KW-0460">Magnesium</keyword>
<keyword id="KW-0479">Metal-binding</keyword>
<keyword id="KW-1185">Reference proteome</keyword>
<keyword id="KW-0964">Secreted</keyword>
<feature type="chain" id="PRO_0000133888" description="Enolase">
    <location>
        <begin position="1"/>
        <end position="456"/>
    </location>
</feature>
<feature type="active site" description="Proton donor" evidence="1">
    <location>
        <position position="207"/>
    </location>
</feature>
<feature type="active site" description="Proton acceptor" evidence="1">
    <location>
        <position position="339"/>
    </location>
</feature>
<feature type="binding site" evidence="1">
    <location>
        <position position="164"/>
    </location>
    <ligand>
        <name>(2R)-2-phosphoglycerate</name>
        <dbReference type="ChEBI" id="CHEBI:58289"/>
    </ligand>
</feature>
<feature type="binding site" evidence="1">
    <location>
        <position position="244"/>
    </location>
    <ligand>
        <name>Mg(2+)</name>
        <dbReference type="ChEBI" id="CHEBI:18420"/>
    </ligand>
</feature>
<feature type="binding site" evidence="1">
    <location>
        <position position="287"/>
    </location>
    <ligand>
        <name>Mg(2+)</name>
        <dbReference type="ChEBI" id="CHEBI:18420"/>
    </ligand>
</feature>
<feature type="binding site" evidence="1">
    <location>
        <position position="314"/>
    </location>
    <ligand>
        <name>Mg(2+)</name>
        <dbReference type="ChEBI" id="CHEBI:18420"/>
    </ligand>
</feature>
<feature type="binding site" evidence="1">
    <location>
        <position position="339"/>
    </location>
    <ligand>
        <name>(2R)-2-phosphoglycerate</name>
        <dbReference type="ChEBI" id="CHEBI:58289"/>
    </ligand>
</feature>
<feature type="binding site" evidence="1">
    <location>
        <position position="368"/>
    </location>
    <ligand>
        <name>(2R)-2-phosphoglycerate</name>
        <dbReference type="ChEBI" id="CHEBI:58289"/>
    </ligand>
</feature>
<feature type="binding site" evidence="1">
    <location>
        <position position="369"/>
    </location>
    <ligand>
        <name>(2R)-2-phosphoglycerate</name>
        <dbReference type="ChEBI" id="CHEBI:58289"/>
    </ligand>
</feature>
<feature type="binding site" evidence="1">
    <location>
        <position position="390"/>
    </location>
    <ligand>
        <name>(2R)-2-phosphoglycerate</name>
        <dbReference type="ChEBI" id="CHEBI:58289"/>
    </ligand>
</feature>
<comment type="function">
    <text evidence="1">Catalyzes the reversible conversion of 2-phosphoglycerate (2-PG) into phosphoenolpyruvate (PEP). It is essential for the degradation of carbohydrates via glycolysis.</text>
</comment>
<comment type="catalytic activity">
    <reaction evidence="1">
        <text>(2R)-2-phosphoglycerate = phosphoenolpyruvate + H2O</text>
        <dbReference type="Rhea" id="RHEA:10164"/>
        <dbReference type="ChEBI" id="CHEBI:15377"/>
        <dbReference type="ChEBI" id="CHEBI:58289"/>
        <dbReference type="ChEBI" id="CHEBI:58702"/>
        <dbReference type="EC" id="4.2.1.11"/>
    </reaction>
</comment>
<comment type="cofactor">
    <cofactor evidence="1">
        <name>Mg(2+)</name>
        <dbReference type="ChEBI" id="CHEBI:18420"/>
    </cofactor>
    <text evidence="1">Binds a second Mg(2+) ion via substrate during catalysis.</text>
</comment>
<comment type="pathway">
    <text evidence="1">Carbohydrate degradation; glycolysis; pyruvate from D-glyceraldehyde 3-phosphate: step 4/5.</text>
</comment>
<comment type="subunit">
    <text evidence="1">Component of the RNA degradosome, a multiprotein complex involved in RNA processing and mRNA degradation.</text>
</comment>
<comment type="subcellular location">
    <subcellularLocation>
        <location evidence="1">Cytoplasm</location>
    </subcellularLocation>
    <subcellularLocation>
        <location evidence="1">Secreted</location>
    </subcellularLocation>
    <subcellularLocation>
        <location evidence="1">Cell surface</location>
    </subcellularLocation>
    <text evidence="1">Fractions of enolase are present in both the cytoplasm and on the cell surface.</text>
</comment>
<comment type="similarity">
    <text evidence="1">Belongs to the enolase family.</text>
</comment>
<organism>
    <name type="scientific">Francisella tularensis subsp. tularensis (strain SCHU S4 / Schu 4)</name>
    <dbReference type="NCBI Taxonomy" id="177416"/>
    <lineage>
        <taxon>Bacteria</taxon>
        <taxon>Pseudomonadati</taxon>
        <taxon>Pseudomonadota</taxon>
        <taxon>Gammaproteobacteria</taxon>
        <taxon>Thiotrichales</taxon>
        <taxon>Francisellaceae</taxon>
        <taxon>Francisella</taxon>
    </lineage>
</organism>
<sequence>MSSQIKQVFARQILDSRGNPTIEVEVVLESGAFGRAAVPSGASTGIREALELRDGNKALFLGKSVYKAVENVNTKIAQAVKGLDALDQRLIDKTMIELDGSENKKNLGANAILGVSLATARAAASHLRKPFYRYLMDVKEYLMPVPMMNVINGGSHADNNVDMQEFMIVPAGFDTFSEALRCGTEVFHILKKVLIADGYSVAGVGDEGGYAPDLPSNEAAIEAILKAVKEAGYEPGKHVFIALDPASSEFYKDGKYELKSENKSLTSEEMIDYYAAWVEKYPIVSIEDGLAEEDWAGWKLLTEKLGNKVQLVGDDLFVTNPSILAKGIEKGIANSILIKLNQIGTLTETFEAMAMAGQAGYTCVVSHRSGETSDTIIADLAVATCSGQIKTGSLSRSDRIAKYNQLLRIEEELGENAIYPGIKAFVFNSDEEVEEVVQEIIVEDSEAEKVVVQVEE</sequence>
<name>ENO_FRATT</name>
<gene>
    <name evidence="1" type="primary">eno</name>
    <name type="ordered locus">FTT_0709</name>
</gene>
<reference key="1">
    <citation type="journal article" date="2005" name="Nat. Genet.">
        <title>The complete genome sequence of Francisella tularensis, the causative agent of tularemia.</title>
        <authorList>
            <person name="Larsson P."/>
            <person name="Oyston P.C.F."/>
            <person name="Chain P."/>
            <person name="Chu M.C."/>
            <person name="Duffield M."/>
            <person name="Fuxelius H.-H."/>
            <person name="Garcia E."/>
            <person name="Haelltorp G."/>
            <person name="Johansson D."/>
            <person name="Isherwood K.E."/>
            <person name="Karp P.D."/>
            <person name="Larsson E."/>
            <person name="Liu Y."/>
            <person name="Michell S."/>
            <person name="Prior J."/>
            <person name="Prior R."/>
            <person name="Malfatti S."/>
            <person name="Sjoestedt A."/>
            <person name="Svensson K."/>
            <person name="Thompson N."/>
            <person name="Vergez L."/>
            <person name="Wagg J.K."/>
            <person name="Wren B.W."/>
            <person name="Lindler L.E."/>
            <person name="Andersson S.G.E."/>
            <person name="Forsman M."/>
            <person name="Titball R.W."/>
        </authorList>
    </citation>
    <scope>NUCLEOTIDE SEQUENCE [LARGE SCALE GENOMIC DNA]</scope>
    <source>
        <strain>SCHU S4 / Schu 4</strain>
    </source>
</reference>
<protein>
    <recommendedName>
        <fullName evidence="1">Enolase</fullName>
        <ecNumber evidence="1">4.2.1.11</ecNumber>
    </recommendedName>
    <alternativeName>
        <fullName evidence="1">2-phospho-D-glycerate hydro-lyase</fullName>
    </alternativeName>
    <alternativeName>
        <fullName evidence="1">2-phosphoglycerate dehydratase</fullName>
    </alternativeName>
</protein>
<accession>Q5NGW8</accession>
<evidence type="ECO:0000255" key="1">
    <source>
        <dbReference type="HAMAP-Rule" id="MF_00318"/>
    </source>
</evidence>
<dbReference type="EC" id="4.2.1.11" evidence="1"/>
<dbReference type="EMBL" id="AJ749949">
    <property type="protein sequence ID" value="CAG45342.1"/>
    <property type="molecule type" value="Genomic_DNA"/>
</dbReference>
<dbReference type="RefSeq" id="WP_003020514.1">
    <property type="nucleotide sequence ID" value="NC_006570.2"/>
</dbReference>
<dbReference type="RefSeq" id="YP_169724.1">
    <property type="nucleotide sequence ID" value="NC_006570.2"/>
</dbReference>
<dbReference type="SMR" id="Q5NGW8"/>
<dbReference type="IntAct" id="Q5NGW8">
    <property type="interactions" value="3"/>
</dbReference>
<dbReference type="STRING" id="177416.FTT_0709"/>
<dbReference type="DNASU" id="3191859"/>
<dbReference type="EnsemblBacteria" id="CAG45342">
    <property type="protein sequence ID" value="CAG45342"/>
    <property type="gene ID" value="FTT_0709"/>
</dbReference>
<dbReference type="KEGG" id="ftu:FTT_0709"/>
<dbReference type="eggNOG" id="COG0148">
    <property type="taxonomic scope" value="Bacteria"/>
</dbReference>
<dbReference type="OrthoDB" id="9804716at2"/>
<dbReference type="UniPathway" id="UPA00109">
    <property type="reaction ID" value="UER00187"/>
</dbReference>
<dbReference type="Proteomes" id="UP000001174">
    <property type="component" value="Chromosome"/>
</dbReference>
<dbReference type="GO" id="GO:0009986">
    <property type="term" value="C:cell surface"/>
    <property type="evidence" value="ECO:0007669"/>
    <property type="project" value="UniProtKB-SubCell"/>
</dbReference>
<dbReference type="GO" id="GO:0005576">
    <property type="term" value="C:extracellular region"/>
    <property type="evidence" value="ECO:0007669"/>
    <property type="project" value="UniProtKB-SubCell"/>
</dbReference>
<dbReference type="GO" id="GO:0000015">
    <property type="term" value="C:phosphopyruvate hydratase complex"/>
    <property type="evidence" value="ECO:0007669"/>
    <property type="project" value="InterPro"/>
</dbReference>
<dbReference type="GO" id="GO:0000287">
    <property type="term" value="F:magnesium ion binding"/>
    <property type="evidence" value="ECO:0007669"/>
    <property type="project" value="UniProtKB-UniRule"/>
</dbReference>
<dbReference type="GO" id="GO:0004634">
    <property type="term" value="F:phosphopyruvate hydratase activity"/>
    <property type="evidence" value="ECO:0007669"/>
    <property type="project" value="UniProtKB-UniRule"/>
</dbReference>
<dbReference type="GO" id="GO:0006096">
    <property type="term" value="P:glycolytic process"/>
    <property type="evidence" value="ECO:0007669"/>
    <property type="project" value="UniProtKB-UniRule"/>
</dbReference>
<dbReference type="CDD" id="cd03313">
    <property type="entry name" value="enolase"/>
    <property type="match status" value="1"/>
</dbReference>
<dbReference type="FunFam" id="3.20.20.120:FF:000001">
    <property type="entry name" value="Enolase"/>
    <property type="match status" value="1"/>
</dbReference>
<dbReference type="FunFam" id="3.30.390.10:FF:000001">
    <property type="entry name" value="Enolase"/>
    <property type="match status" value="1"/>
</dbReference>
<dbReference type="Gene3D" id="3.20.20.120">
    <property type="entry name" value="Enolase-like C-terminal domain"/>
    <property type="match status" value="1"/>
</dbReference>
<dbReference type="Gene3D" id="3.30.390.10">
    <property type="entry name" value="Enolase-like, N-terminal domain"/>
    <property type="match status" value="1"/>
</dbReference>
<dbReference type="HAMAP" id="MF_00318">
    <property type="entry name" value="Enolase"/>
    <property type="match status" value="1"/>
</dbReference>
<dbReference type="InterPro" id="IPR000941">
    <property type="entry name" value="Enolase"/>
</dbReference>
<dbReference type="InterPro" id="IPR036849">
    <property type="entry name" value="Enolase-like_C_sf"/>
</dbReference>
<dbReference type="InterPro" id="IPR029017">
    <property type="entry name" value="Enolase-like_N"/>
</dbReference>
<dbReference type="InterPro" id="IPR020810">
    <property type="entry name" value="Enolase_C"/>
</dbReference>
<dbReference type="InterPro" id="IPR020809">
    <property type="entry name" value="Enolase_CS"/>
</dbReference>
<dbReference type="InterPro" id="IPR020811">
    <property type="entry name" value="Enolase_N"/>
</dbReference>
<dbReference type="NCBIfam" id="TIGR01060">
    <property type="entry name" value="eno"/>
    <property type="match status" value="1"/>
</dbReference>
<dbReference type="PANTHER" id="PTHR11902">
    <property type="entry name" value="ENOLASE"/>
    <property type="match status" value="1"/>
</dbReference>
<dbReference type="PANTHER" id="PTHR11902:SF1">
    <property type="entry name" value="ENOLASE"/>
    <property type="match status" value="1"/>
</dbReference>
<dbReference type="Pfam" id="PF00113">
    <property type="entry name" value="Enolase_C"/>
    <property type="match status" value="1"/>
</dbReference>
<dbReference type="Pfam" id="PF03952">
    <property type="entry name" value="Enolase_N"/>
    <property type="match status" value="1"/>
</dbReference>
<dbReference type="PIRSF" id="PIRSF001400">
    <property type="entry name" value="Enolase"/>
    <property type="match status" value="1"/>
</dbReference>
<dbReference type="PRINTS" id="PR00148">
    <property type="entry name" value="ENOLASE"/>
</dbReference>
<dbReference type="SFLD" id="SFLDS00001">
    <property type="entry name" value="Enolase"/>
    <property type="match status" value="1"/>
</dbReference>
<dbReference type="SFLD" id="SFLDF00002">
    <property type="entry name" value="enolase"/>
    <property type="match status" value="1"/>
</dbReference>
<dbReference type="SMART" id="SM01192">
    <property type="entry name" value="Enolase_C"/>
    <property type="match status" value="1"/>
</dbReference>
<dbReference type="SMART" id="SM01193">
    <property type="entry name" value="Enolase_N"/>
    <property type="match status" value="1"/>
</dbReference>
<dbReference type="SUPFAM" id="SSF51604">
    <property type="entry name" value="Enolase C-terminal domain-like"/>
    <property type="match status" value="1"/>
</dbReference>
<dbReference type="SUPFAM" id="SSF54826">
    <property type="entry name" value="Enolase N-terminal domain-like"/>
    <property type="match status" value="1"/>
</dbReference>
<dbReference type="PROSITE" id="PS00164">
    <property type="entry name" value="ENOLASE"/>
    <property type="match status" value="1"/>
</dbReference>